<name>HBA_ANAPP</name>
<comment type="function">
    <text>Involved in oxygen transport from the lung to the various peripheral tissues.</text>
</comment>
<comment type="subunit">
    <text>Heterotetramer of two alpha chains and two beta chains.</text>
</comment>
<comment type="tissue specificity">
    <text>Red blood cells.</text>
</comment>
<comment type="similarity">
    <text evidence="2">Belongs to the globin family.</text>
</comment>
<dbReference type="PIR" id="A91721">
    <property type="entry name" value="HADKAM"/>
</dbReference>
<dbReference type="SMR" id="P01988"/>
<dbReference type="STRING" id="8840.ENSAPLP00000016307"/>
<dbReference type="Ensembl" id="ENSAPLT00000017123.2">
    <property type="protein sequence ID" value="ENSAPLP00000016307.2"/>
    <property type="gene ID" value="ENSAPLG00000016406.2"/>
</dbReference>
<dbReference type="GeneTree" id="ENSGT00940000154590"/>
<dbReference type="OMA" id="MFTSFPT"/>
<dbReference type="Proteomes" id="UP000016666">
    <property type="component" value="Chromosome 15"/>
</dbReference>
<dbReference type="GO" id="GO:0072562">
    <property type="term" value="C:blood microparticle"/>
    <property type="evidence" value="ECO:0007669"/>
    <property type="project" value="TreeGrafter"/>
</dbReference>
<dbReference type="GO" id="GO:0031838">
    <property type="term" value="C:haptoglobin-hemoglobin complex"/>
    <property type="evidence" value="ECO:0007669"/>
    <property type="project" value="TreeGrafter"/>
</dbReference>
<dbReference type="GO" id="GO:0005833">
    <property type="term" value="C:hemoglobin complex"/>
    <property type="evidence" value="ECO:0007669"/>
    <property type="project" value="InterPro"/>
</dbReference>
<dbReference type="GO" id="GO:0031720">
    <property type="term" value="F:haptoglobin binding"/>
    <property type="evidence" value="ECO:0007669"/>
    <property type="project" value="TreeGrafter"/>
</dbReference>
<dbReference type="GO" id="GO:0020037">
    <property type="term" value="F:heme binding"/>
    <property type="evidence" value="ECO:0007669"/>
    <property type="project" value="InterPro"/>
</dbReference>
<dbReference type="GO" id="GO:0005506">
    <property type="term" value="F:iron ion binding"/>
    <property type="evidence" value="ECO:0007669"/>
    <property type="project" value="InterPro"/>
</dbReference>
<dbReference type="GO" id="GO:0043177">
    <property type="term" value="F:organic acid binding"/>
    <property type="evidence" value="ECO:0007669"/>
    <property type="project" value="TreeGrafter"/>
</dbReference>
<dbReference type="GO" id="GO:0019825">
    <property type="term" value="F:oxygen binding"/>
    <property type="evidence" value="ECO:0007669"/>
    <property type="project" value="InterPro"/>
</dbReference>
<dbReference type="GO" id="GO:0005344">
    <property type="term" value="F:oxygen carrier activity"/>
    <property type="evidence" value="ECO:0007669"/>
    <property type="project" value="UniProtKB-KW"/>
</dbReference>
<dbReference type="GO" id="GO:0004601">
    <property type="term" value="F:peroxidase activity"/>
    <property type="evidence" value="ECO:0007669"/>
    <property type="project" value="TreeGrafter"/>
</dbReference>
<dbReference type="GO" id="GO:0042744">
    <property type="term" value="P:hydrogen peroxide catabolic process"/>
    <property type="evidence" value="ECO:0007669"/>
    <property type="project" value="TreeGrafter"/>
</dbReference>
<dbReference type="CDD" id="cd08927">
    <property type="entry name" value="Hb-alpha-like"/>
    <property type="match status" value="1"/>
</dbReference>
<dbReference type="FunFam" id="1.10.490.10:FF:000002">
    <property type="entry name" value="Hemoglobin subunit alpha"/>
    <property type="match status" value="1"/>
</dbReference>
<dbReference type="Gene3D" id="1.10.490.10">
    <property type="entry name" value="Globins"/>
    <property type="match status" value="1"/>
</dbReference>
<dbReference type="InterPro" id="IPR000971">
    <property type="entry name" value="Globin"/>
</dbReference>
<dbReference type="InterPro" id="IPR009050">
    <property type="entry name" value="Globin-like_sf"/>
</dbReference>
<dbReference type="InterPro" id="IPR012292">
    <property type="entry name" value="Globin/Proto"/>
</dbReference>
<dbReference type="InterPro" id="IPR002338">
    <property type="entry name" value="Hemoglobin_a-typ"/>
</dbReference>
<dbReference type="InterPro" id="IPR050056">
    <property type="entry name" value="Hemoglobin_oxygen_transport"/>
</dbReference>
<dbReference type="InterPro" id="IPR002339">
    <property type="entry name" value="Hemoglobin_pi"/>
</dbReference>
<dbReference type="PANTHER" id="PTHR11442">
    <property type="entry name" value="HEMOGLOBIN FAMILY MEMBER"/>
    <property type="match status" value="1"/>
</dbReference>
<dbReference type="PANTHER" id="PTHR11442:SF48">
    <property type="entry name" value="HEMOGLOBIN SUBUNIT ALPHA"/>
    <property type="match status" value="1"/>
</dbReference>
<dbReference type="Pfam" id="PF00042">
    <property type="entry name" value="Globin"/>
    <property type="match status" value="1"/>
</dbReference>
<dbReference type="PRINTS" id="PR00612">
    <property type="entry name" value="ALPHAHAEM"/>
</dbReference>
<dbReference type="PRINTS" id="PR00815">
    <property type="entry name" value="PIHAEM"/>
</dbReference>
<dbReference type="SUPFAM" id="SSF46458">
    <property type="entry name" value="Globin-like"/>
    <property type="match status" value="1"/>
</dbReference>
<dbReference type="PROSITE" id="PS01033">
    <property type="entry name" value="GLOBIN"/>
    <property type="match status" value="1"/>
</dbReference>
<gene>
    <name type="primary">HBAA</name>
</gene>
<sequence length="142" mass="15379">MVLSAADKTNVKGVFSKIGGHAEEYGAETLERMFIAYPQTKTYFPHFDLSHGSAQIKAHGKKVAAALVEAVNHIDDIAGALSKLSDLHAQKLRVDPVNFKFLGHCFLVVVAIHHPAALTPEVHASLDKFMCAVGAVLTAKYR</sequence>
<feature type="initiator methionine" description="Removed" evidence="1">
    <location>
        <position position="1"/>
    </location>
</feature>
<feature type="chain" id="PRO_0000052548" description="Hemoglobin subunit alpha-A">
    <location>
        <begin position="2"/>
        <end position="142"/>
    </location>
</feature>
<feature type="domain" description="Globin" evidence="2">
    <location>
        <begin position="2"/>
        <end position="142"/>
    </location>
</feature>
<feature type="binding site" evidence="2">
    <location>
        <position position="59"/>
    </location>
    <ligand>
        <name>O2</name>
        <dbReference type="ChEBI" id="CHEBI:15379"/>
    </ligand>
</feature>
<feature type="binding site" description="proximal binding residue" evidence="2">
    <location>
        <position position="88"/>
    </location>
    <ligand>
        <name>heme b</name>
        <dbReference type="ChEBI" id="CHEBI:60344"/>
    </ligand>
    <ligandPart>
        <name>Fe</name>
        <dbReference type="ChEBI" id="CHEBI:18248"/>
    </ligandPart>
</feature>
<reference key="1">
    <citation type="journal article" date="1983" name="Hoppe-Seyler's Z. Physiol. Chem.">
        <title>The amino-acid sequence of Northern Mallard (Anas platyrhynchos platyrhynchos) hemoglobin.</title>
        <authorList>
            <person name="Godovac-Zimmermann J."/>
            <person name="Braunitzer G."/>
        </authorList>
    </citation>
    <scope>PROTEIN SEQUENCE OF 2-142</scope>
</reference>
<evidence type="ECO:0000250" key="1"/>
<evidence type="ECO:0000255" key="2">
    <source>
        <dbReference type="PROSITE-ProRule" id="PRU00238"/>
    </source>
</evidence>
<proteinExistence type="evidence at protein level"/>
<accession>P01988</accession>
<protein>
    <recommendedName>
        <fullName>Hemoglobin subunit alpha-A</fullName>
    </recommendedName>
    <alternativeName>
        <fullName>Alpha-A-globin</fullName>
    </alternativeName>
    <alternativeName>
        <fullName>Hemoglobin alpha-A chain</fullName>
    </alternativeName>
</protein>
<organism>
    <name type="scientific">Anas platyrhynchos platyrhynchos</name>
    <name type="common">Northern mallard</name>
    <dbReference type="NCBI Taxonomy" id="8840"/>
    <lineage>
        <taxon>Eukaryota</taxon>
        <taxon>Metazoa</taxon>
        <taxon>Chordata</taxon>
        <taxon>Craniata</taxon>
        <taxon>Vertebrata</taxon>
        <taxon>Euteleostomi</taxon>
        <taxon>Archelosauria</taxon>
        <taxon>Archosauria</taxon>
        <taxon>Dinosauria</taxon>
        <taxon>Saurischia</taxon>
        <taxon>Theropoda</taxon>
        <taxon>Coelurosauria</taxon>
        <taxon>Aves</taxon>
        <taxon>Neognathae</taxon>
        <taxon>Galloanserae</taxon>
        <taxon>Anseriformes</taxon>
        <taxon>Anatidae</taxon>
        <taxon>Anatinae</taxon>
        <taxon>Anas</taxon>
    </lineage>
</organism>
<keyword id="KW-0903">Direct protein sequencing</keyword>
<keyword id="KW-0349">Heme</keyword>
<keyword id="KW-0408">Iron</keyword>
<keyword id="KW-0479">Metal-binding</keyword>
<keyword id="KW-0561">Oxygen transport</keyword>
<keyword id="KW-1185">Reference proteome</keyword>
<keyword id="KW-0813">Transport</keyword>